<keyword id="KW-0007">Acetylation</keyword>
<keyword id="KW-0030">Aminoacyl-tRNA synthetase</keyword>
<keyword id="KW-0067">ATP-binding</keyword>
<keyword id="KW-0963">Cytoplasm</keyword>
<keyword id="KW-0436">Ligase</keyword>
<keyword id="KW-0479">Metal-binding</keyword>
<keyword id="KW-0547">Nucleotide-binding</keyword>
<keyword id="KW-0648">Protein biosynthesis</keyword>
<keyword id="KW-1185">Reference proteome</keyword>
<keyword id="KW-0694">RNA-binding</keyword>
<keyword id="KW-0820">tRNA-binding</keyword>
<keyword id="KW-0862">Zinc</keyword>
<organism>
    <name type="scientific">Shigella boydii serotype 18 (strain CDC 3083-94 / BS512)</name>
    <dbReference type="NCBI Taxonomy" id="344609"/>
    <lineage>
        <taxon>Bacteria</taxon>
        <taxon>Pseudomonadati</taxon>
        <taxon>Pseudomonadota</taxon>
        <taxon>Gammaproteobacteria</taxon>
        <taxon>Enterobacterales</taxon>
        <taxon>Enterobacteriaceae</taxon>
        <taxon>Shigella</taxon>
    </lineage>
</organism>
<dbReference type="EC" id="6.1.1.3" evidence="1"/>
<dbReference type="EMBL" id="CP001063">
    <property type="protein sequence ID" value="ACD10392.1"/>
    <property type="molecule type" value="Genomic_DNA"/>
</dbReference>
<dbReference type="RefSeq" id="WP_001144196.1">
    <property type="nucleotide sequence ID" value="NC_010658.1"/>
</dbReference>
<dbReference type="SMR" id="B2U397"/>
<dbReference type="STRING" id="344609.SbBS512_E1961"/>
<dbReference type="KEGG" id="sbc:SbBS512_E1961"/>
<dbReference type="HOGENOM" id="CLU_008554_0_1_6"/>
<dbReference type="Proteomes" id="UP000001030">
    <property type="component" value="Chromosome"/>
</dbReference>
<dbReference type="GO" id="GO:0005829">
    <property type="term" value="C:cytosol"/>
    <property type="evidence" value="ECO:0007669"/>
    <property type="project" value="TreeGrafter"/>
</dbReference>
<dbReference type="GO" id="GO:0005524">
    <property type="term" value="F:ATP binding"/>
    <property type="evidence" value="ECO:0007669"/>
    <property type="project" value="UniProtKB-UniRule"/>
</dbReference>
<dbReference type="GO" id="GO:0046872">
    <property type="term" value="F:metal ion binding"/>
    <property type="evidence" value="ECO:0007669"/>
    <property type="project" value="UniProtKB-KW"/>
</dbReference>
<dbReference type="GO" id="GO:0004829">
    <property type="term" value="F:threonine-tRNA ligase activity"/>
    <property type="evidence" value="ECO:0007669"/>
    <property type="project" value="UniProtKB-UniRule"/>
</dbReference>
<dbReference type="GO" id="GO:0000049">
    <property type="term" value="F:tRNA binding"/>
    <property type="evidence" value="ECO:0007669"/>
    <property type="project" value="UniProtKB-KW"/>
</dbReference>
<dbReference type="GO" id="GO:0006435">
    <property type="term" value="P:threonyl-tRNA aminoacylation"/>
    <property type="evidence" value="ECO:0007669"/>
    <property type="project" value="UniProtKB-UniRule"/>
</dbReference>
<dbReference type="CDD" id="cd01667">
    <property type="entry name" value="TGS_ThrRS"/>
    <property type="match status" value="1"/>
</dbReference>
<dbReference type="CDD" id="cd00860">
    <property type="entry name" value="ThrRS_anticodon"/>
    <property type="match status" value="1"/>
</dbReference>
<dbReference type="CDD" id="cd00771">
    <property type="entry name" value="ThrRS_core"/>
    <property type="match status" value="1"/>
</dbReference>
<dbReference type="FunFam" id="3.10.20.30:FF:000005">
    <property type="entry name" value="Threonine--tRNA ligase"/>
    <property type="match status" value="1"/>
</dbReference>
<dbReference type="FunFam" id="3.30.54.20:FF:000002">
    <property type="entry name" value="Threonine--tRNA ligase"/>
    <property type="match status" value="1"/>
</dbReference>
<dbReference type="FunFam" id="3.30.930.10:FF:000002">
    <property type="entry name" value="Threonine--tRNA ligase"/>
    <property type="match status" value="1"/>
</dbReference>
<dbReference type="FunFam" id="3.40.50.800:FF:000001">
    <property type="entry name" value="Threonine--tRNA ligase"/>
    <property type="match status" value="1"/>
</dbReference>
<dbReference type="FunFam" id="3.30.980.10:FF:000005">
    <property type="entry name" value="Threonyl-tRNA synthetase, mitochondrial"/>
    <property type="match status" value="1"/>
</dbReference>
<dbReference type="Gene3D" id="3.10.20.30">
    <property type="match status" value="1"/>
</dbReference>
<dbReference type="Gene3D" id="3.30.54.20">
    <property type="match status" value="1"/>
</dbReference>
<dbReference type="Gene3D" id="3.40.50.800">
    <property type="entry name" value="Anticodon-binding domain"/>
    <property type="match status" value="1"/>
</dbReference>
<dbReference type="Gene3D" id="3.30.930.10">
    <property type="entry name" value="Bira Bifunctional Protein, Domain 2"/>
    <property type="match status" value="1"/>
</dbReference>
<dbReference type="Gene3D" id="3.30.980.10">
    <property type="entry name" value="Threonyl-trna Synthetase, Chain A, domain 2"/>
    <property type="match status" value="1"/>
</dbReference>
<dbReference type="HAMAP" id="MF_00184">
    <property type="entry name" value="Thr_tRNA_synth"/>
    <property type="match status" value="1"/>
</dbReference>
<dbReference type="InterPro" id="IPR002314">
    <property type="entry name" value="aa-tRNA-synt_IIb"/>
</dbReference>
<dbReference type="InterPro" id="IPR006195">
    <property type="entry name" value="aa-tRNA-synth_II"/>
</dbReference>
<dbReference type="InterPro" id="IPR045864">
    <property type="entry name" value="aa-tRNA-synth_II/BPL/LPL"/>
</dbReference>
<dbReference type="InterPro" id="IPR004154">
    <property type="entry name" value="Anticodon-bd"/>
</dbReference>
<dbReference type="InterPro" id="IPR036621">
    <property type="entry name" value="Anticodon-bd_dom_sf"/>
</dbReference>
<dbReference type="InterPro" id="IPR012675">
    <property type="entry name" value="Beta-grasp_dom_sf"/>
</dbReference>
<dbReference type="InterPro" id="IPR004095">
    <property type="entry name" value="TGS"/>
</dbReference>
<dbReference type="InterPro" id="IPR012676">
    <property type="entry name" value="TGS-like"/>
</dbReference>
<dbReference type="InterPro" id="IPR002320">
    <property type="entry name" value="Thr-tRNA-ligase_IIa"/>
</dbReference>
<dbReference type="InterPro" id="IPR018163">
    <property type="entry name" value="Thr/Ala-tRNA-synth_IIc_edit"/>
</dbReference>
<dbReference type="InterPro" id="IPR047246">
    <property type="entry name" value="ThrRS_anticodon"/>
</dbReference>
<dbReference type="InterPro" id="IPR033728">
    <property type="entry name" value="ThrRS_core"/>
</dbReference>
<dbReference type="InterPro" id="IPR012947">
    <property type="entry name" value="tRNA_SAD"/>
</dbReference>
<dbReference type="NCBIfam" id="TIGR00418">
    <property type="entry name" value="thrS"/>
    <property type="match status" value="1"/>
</dbReference>
<dbReference type="PANTHER" id="PTHR11451:SF44">
    <property type="entry name" value="THREONINE--TRNA LIGASE, CHLOROPLASTIC_MITOCHONDRIAL 2"/>
    <property type="match status" value="1"/>
</dbReference>
<dbReference type="PANTHER" id="PTHR11451">
    <property type="entry name" value="THREONINE-TRNA LIGASE"/>
    <property type="match status" value="1"/>
</dbReference>
<dbReference type="Pfam" id="PF03129">
    <property type="entry name" value="HGTP_anticodon"/>
    <property type="match status" value="1"/>
</dbReference>
<dbReference type="Pfam" id="PF02824">
    <property type="entry name" value="TGS"/>
    <property type="match status" value="1"/>
</dbReference>
<dbReference type="Pfam" id="PF00587">
    <property type="entry name" value="tRNA-synt_2b"/>
    <property type="match status" value="1"/>
</dbReference>
<dbReference type="Pfam" id="PF07973">
    <property type="entry name" value="tRNA_SAD"/>
    <property type="match status" value="1"/>
</dbReference>
<dbReference type="PRINTS" id="PR01047">
    <property type="entry name" value="TRNASYNTHTHR"/>
</dbReference>
<dbReference type="SMART" id="SM00863">
    <property type="entry name" value="tRNA_SAD"/>
    <property type="match status" value="1"/>
</dbReference>
<dbReference type="SUPFAM" id="SSF52954">
    <property type="entry name" value="Class II aaRS ABD-related"/>
    <property type="match status" value="1"/>
</dbReference>
<dbReference type="SUPFAM" id="SSF55681">
    <property type="entry name" value="Class II aaRS and biotin synthetases"/>
    <property type="match status" value="1"/>
</dbReference>
<dbReference type="SUPFAM" id="SSF81271">
    <property type="entry name" value="TGS-like"/>
    <property type="match status" value="1"/>
</dbReference>
<dbReference type="SUPFAM" id="SSF55186">
    <property type="entry name" value="ThrRS/AlaRS common domain"/>
    <property type="match status" value="1"/>
</dbReference>
<dbReference type="PROSITE" id="PS50862">
    <property type="entry name" value="AA_TRNA_LIGASE_II"/>
    <property type="match status" value="1"/>
</dbReference>
<dbReference type="PROSITE" id="PS51880">
    <property type="entry name" value="TGS"/>
    <property type="match status" value="1"/>
</dbReference>
<evidence type="ECO:0000255" key="1">
    <source>
        <dbReference type="HAMAP-Rule" id="MF_00184"/>
    </source>
</evidence>
<evidence type="ECO:0000255" key="2">
    <source>
        <dbReference type="PROSITE-ProRule" id="PRU01228"/>
    </source>
</evidence>
<name>SYT_SHIB3</name>
<proteinExistence type="inferred from homology"/>
<protein>
    <recommendedName>
        <fullName evidence="1">Threonine--tRNA ligase</fullName>
        <ecNumber evidence="1">6.1.1.3</ecNumber>
    </recommendedName>
    <alternativeName>
        <fullName evidence="1">Threonyl-tRNA synthetase</fullName>
        <shortName evidence="1">ThrRS</shortName>
    </alternativeName>
</protein>
<accession>B2U397</accession>
<sequence length="642" mass="73956">MPVITLPDGSQRHYDHAVSPMDVALDIGPGLAKACIAGRVNGELVDACDLIENDAQLSIITAKDEEGLEIIRHSCAHLLGHAIKQLWPHTKMAIGPVIDNGFYYDVDLDRTLTQEDVEALEKRMHELAEKNYDVIKKKVSWHAARETFANRGESYKVSILDENIAHDDKPGLYFHEEYVDMCRGPHVPNMRFCHHFKLMKTAGAYWRGDSNNKMLQRIYGTAWADKKALNAYLQRLEEAAKRDHRKIGKQLDLYHMQEEAPGMVFWHNDGWTIFRELEVFVRSKLKEYQYQEVKGPFMMDRVLWEKTGHWDNYKDAMFTTSSENREYCIKPMNCPGHVQIFNQGLKSYRDLPLRMAEFGSCHRNEPSGSLHGLMRVRGFTQDDAHIFCTEEQIRDEVNGCIRLVYDMYSTFGFEKIVVKLSTRPEKRIGSDEMWDRAEADLAVALEENNIPFEYQLGEGAFYGPKIEFTLYDCLDRAWQCGTVQLDFSLPSRLSASYVGEDNERKVPVMIHRAILGSMERFIGILTEEFAGFFPTWLAPVQVVIMNITDSQSEYVNELTQKLSNAGIRVKADLRNEKIGFKIREHTLRRVPYMLVCGDKEVESGKVAVRTRRGKDLGSMDVNEVIEKLQQEIRSRSLKQLEE</sequence>
<comment type="function">
    <text evidence="1">Catalyzes the attachment of threonine to tRNA(Thr) in a two-step reaction: L-threonine is first activated by ATP to form Thr-AMP and then transferred to the acceptor end of tRNA(Thr). Also edits incorrectly charged L-seryl-tRNA(Thr).</text>
</comment>
<comment type="catalytic activity">
    <reaction evidence="1">
        <text>tRNA(Thr) + L-threonine + ATP = L-threonyl-tRNA(Thr) + AMP + diphosphate + H(+)</text>
        <dbReference type="Rhea" id="RHEA:24624"/>
        <dbReference type="Rhea" id="RHEA-COMP:9670"/>
        <dbReference type="Rhea" id="RHEA-COMP:9704"/>
        <dbReference type="ChEBI" id="CHEBI:15378"/>
        <dbReference type="ChEBI" id="CHEBI:30616"/>
        <dbReference type="ChEBI" id="CHEBI:33019"/>
        <dbReference type="ChEBI" id="CHEBI:57926"/>
        <dbReference type="ChEBI" id="CHEBI:78442"/>
        <dbReference type="ChEBI" id="CHEBI:78534"/>
        <dbReference type="ChEBI" id="CHEBI:456215"/>
        <dbReference type="EC" id="6.1.1.3"/>
    </reaction>
</comment>
<comment type="cofactor">
    <cofactor evidence="1">
        <name>Zn(2+)</name>
        <dbReference type="ChEBI" id="CHEBI:29105"/>
    </cofactor>
    <text evidence="1">Binds 1 zinc ion per subunit.</text>
</comment>
<comment type="subunit">
    <text evidence="1">Homodimer.</text>
</comment>
<comment type="subcellular location">
    <subcellularLocation>
        <location evidence="1">Cytoplasm</location>
    </subcellularLocation>
</comment>
<comment type="similarity">
    <text evidence="1">Belongs to the class-II aminoacyl-tRNA synthetase family.</text>
</comment>
<gene>
    <name evidence="1" type="primary">thrS</name>
    <name type="ordered locus">SbBS512_E1961</name>
</gene>
<feature type="chain" id="PRO_1000098614" description="Threonine--tRNA ligase">
    <location>
        <begin position="1"/>
        <end position="642"/>
    </location>
</feature>
<feature type="domain" description="TGS" evidence="2">
    <location>
        <begin position="1"/>
        <end position="61"/>
    </location>
</feature>
<feature type="region of interest" description="Catalytic" evidence="1">
    <location>
        <begin position="243"/>
        <end position="534"/>
    </location>
</feature>
<feature type="binding site" evidence="1">
    <location>
        <position position="334"/>
    </location>
    <ligand>
        <name>Zn(2+)</name>
        <dbReference type="ChEBI" id="CHEBI:29105"/>
    </ligand>
</feature>
<feature type="binding site" evidence="1">
    <location>
        <position position="385"/>
    </location>
    <ligand>
        <name>Zn(2+)</name>
        <dbReference type="ChEBI" id="CHEBI:29105"/>
    </ligand>
</feature>
<feature type="binding site" evidence="1">
    <location>
        <position position="511"/>
    </location>
    <ligand>
        <name>Zn(2+)</name>
        <dbReference type="ChEBI" id="CHEBI:29105"/>
    </ligand>
</feature>
<feature type="modified residue" description="N6-acetyllysine" evidence="1">
    <location>
        <position position="286"/>
    </location>
</feature>
<reference key="1">
    <citation type="submission" date="2008-05" db="EMBL/GenBank/DDBJ databases">
        <title>Complete sequence of Shigella boydii serotype 18 strain BS512.</title>
        <authorList>
            <person name="Rasko D.A."/>
            <person name="Rosovitz M."/>
            <person name="Maurelli A.T."/>
            <person name="Myers G."/>
            <person name="Seshadri R."/>
            <person name="Cer R."/>
            <person name="Jiang L."/>
            <person name="Ravel J."/>
            <person name="Sebastian Y."/>
        </authorList>
    </citation>
    <scope>NUCLEOTIDE SEQUENCE [LARGE SCALE GENOMIC DNA]</scope>
    <source>
        <strain>CDC 3083-94 / BS512</strain>
    </source>
</reference>